<protein>
    <recommendedName>
        <fullName evidence="1">Enolase</fullName>
        <ecNumber evidence="1">4.2.1.11</ecNumber>
    </recommendedName>
    <alternativeName>
        <fullName evidence="1">2-phospho-D-glycerate hydro-lyase</fullName>
    </alternativeName>
    <alternativeName>
        <fullName evidence="1">2-phosphoglycerate dehydratase</fullName>
    </alternativeName>
</protein>
<sequence length="422" mass="45918">MIYIDNIVAQEVMDSRGNPTVKATVTLSDGNSASAIVPSGASTGKREALELRDGDSRYLGKGVLQACENVNTKLSEELIGLSPFDQSEIDAIIQELDGTENFANIGANAALGVSMAVARSAAKSLNIPLYRYLGGANALTLPVPMLNIINGGSHADNTVDFQEYMIMPLGFENFSESLRASAEVYHHLKKILKDSKHITSIGDEGGFAPNLKTNEEPIQIIIQAIEKAGYRPGEEIALALDVASSEFVNEQGLYHLEGEGRTLSSEELVGYYESLIAKYPIVSIEDGLSEDDWKGWKYLTERLGGKVQLVGDDLFVTNAKILQEGISQGIANAILIKPNQIGTVSQTMQTVRLAQRNHYRCVMSHRSGESEDSFIADFAVALNTGEIKTGSTARSERIAKYNRLLAIESELCRSEYLGRSLF</sequence>
<keyword id="KW-0963">Cytoplasm</keyword>
<keyword id="KW-0324">Glycolysis</keyword>
<keyword id="KW-0456">Lyase</keyword>
<keyword id="KW-0460">Magnesium</keyword>
<keyword id="KW-0479">Metal-binding</keyword>
<keyword id="KW-1185">Reference proteome</keyword>
<keyword id="KW-0964">Secreted</keyword>
<evidence type="ECO:0000255" key="1">
    <source>
        <dbReference type="HAMAP-Rule" id="MF_00318"/>
    </source>
</evidence>
<gene>
    <name evidence="1" type="primary">eno</name>
    <name type="ordered locus">WS1494</name>
</gene>
<proteinExistence type="inferred from homology"/>
<accession>Q7M8Q0</accession>
<comment type="function">
    <text evidence="1">Catalyzes the reversible conversion of 2-phosphoglycerate (2-PG) into phosphoenolpyruvate (PEP). It is essential for the degradation of carbohydrates via glycolysis.</text>
</comment>
<comment type="catalytic activity">
    <reaction evidence="1">
        <text>(2R)-2-phosphoglycerate = phosphoenolpyruvate + H2O</text>
        <dbReference type="Rhea" id="RHEA:10164"/>
        <dbReference type="ChEBI" id="CHEBI:15377"/>
        <dbReference type="ChEBI" id="CHEBI:58289"/>
        <dbReference type="ChEBI" id="CHEBI:58702"/>
        <dbReference type="EC" id="4.2.1.11"/>
    </reaction>
</comment>
<comment type="cofactor">
    <cofactor evidence="1">
        <name>Mg(2+)</name>
        <dbReference type="ChEBI" id="CHEBI:18420"/>
    </cofactor>
    <text evidence="1">Binds a second Mg(2+) ion via substrate during catalysis.</text>
</comment>
<comment type="pathway">
    <text evidence="1">Carbohydrate degradation; glycolysis; pyruvate from D-glyceraldehyde 3-phosphate: step 4/5.</text>
</comment>
<comment type="subcellular location">
    <subcellularLocation>
        <location evidence="1">Cytoplasm</location>
    </subcellularLocation>
    <subcellularLocation>
        <location evidence="1">Secreted</location>
    </subcellularLocation>
    <subcellularLocation>
        <location evidence="1">Cell surface</location>
    </subcellularLocation>
    <text evidence="1">Fractions of enolase are present in both the cytoplasm and on the cell surface.</text>
</comment>
<comment type="similarity">
    <text evidence="1">Belongs to the enolase family.</text>
</comment>
<dbReference type="EC" id="4.2.1.11" evidence="1"/>
<dbReference type="EMBL" id="BX571661">
    <property type="protein sequence ID" value="CAE10546.1"/>
    <property type="molecule type" value="Genomic_DNA"/>
</dbReference>
<dbReference type="RefSeq" id="WP_011139330.1">
    <property type="nucleotide sequence ID" value="NC_005090.1"/>
</dbReference>
<dbReference type="SMR" id="Q7M8Q0"/>
<dbReference type="STRING" id="273121.WS1494"/>
<dbReference type="KEGG" id="wsu:WS1494"/>
<dbReference type="eggNOG" id="COG0148">
    <property type="taxonomic scope" value="Bacteria"/>
</dbReference>
<dbReference type="HOGENOM" id="CLU_031223_2_1_7"/>
<dbReference type="UniPathway" id="UPA00109">
    <property type="reaction ID" value="UER00187"/>
</dbReference>
<dbReference type="Proteomes" id="UP000000422">
    <property type="component" value="Chromosome"/>
</dbReference>
<dbReference type="GO" id="GO:0009986">
    <property type="term" value="C:cell surface"/>
    <property type="evidence" value="ECO:0007669"/>
    <property type="project" value="UniProtKB-SubCell"/>
</dbReference>
<dbReference type="GO" id="GO:0005576">
    <property type="term" value="C:extracellular region"/>
    <property type="evidence" value="ECO:0007669"/>
    <property type="project" value="UniProtKB-SubCell"/>
</dbReference>
<dbReference type="GO" id="GO:0000015">
    <property type="term" value="C:phosphopyruvate hydratase complex"/>
    <property type="evidence" value="ECO:0007669"/>
    <property type="project" value="InterPro"/>
</dbReference>
<dbReference type="GO" id="GO:0000287">
    <property type="term" value="F:magnesium ion binding"/>
    <property type="evidence" value="ECO:0007669"/>
    <property type="project" value="UniProtKB-UniRule"/>
</dbReference>
<dbReference type="GO" id="GO:0004634">
    <property type="term" value="F:phosphopyruvate hydratase activity"/>
    <property type="evidence" value="ECO:0007669"/>
    <property type="project" value="UniProtKB-UniRule"/>
</dbReference>
<dbReference type="GO" id="GO:0006096">
    <property type="term" value="P:glycolytic process"/>
    <property type="evidence" value="ECO:0007669"/>
    <property type="project" value="UniProtKB-UniRule"/>
</dbReference>
<dbReference type="CDD" id="cd03313">
    <property type="entry name" value="enolase"/>
    <property type="match status" value="1"/>
</dbReference>
<dbReference type="Gene3D" id="3.20.20.120">
    <property type="entry name" value="Enolase-like C-terminal domain"/>
    <property type="match status" value="1"/>
</dbReference>
<dbReference type="Gene3D" id="3.30.390.10">
    <property type="entry name" value="Enolase-like, N-terminal domain"/>
    <property type="match status" value="1"/>
</dbReference>
<dbReference type="HAMAP" id="MF_00318">
    <property type="entry name" value="Enolase"/>
    <property type="match status" value="1"/>
</dbReference>
<dbReference type="InterPro" id="IPR000941">
    <property type="entry name" value="Enolase"/>
</dbReference>
<dbReference type="InterPro" id="IPR036849">
    <property type="entry name" value="Enolase-like_C_sf"/>
</dbReference>
<dbReference type="InterPro" id="IPR029017">
    <property type="entry name" value="Enolase-like_N"/>
</dbReference>
<dbReference type="InterPro" id="IPR020810">
    <property type="entry name" value="Enolase_C"/>
</dbReference>
<dbReference type="InterPro" id="IPR020809">
    <property type="entry name" value="Enolase_CS"/>
</dbReference>
<dbReference type="InterPro" id="IPR020811">
    <property type="entry name" value="Enolase_N"/>
</dbReference>
<dbReference type="NCBIfam" id="TIGR01060">
    <property type="entry name" value="eno"/>
    <property type="match status" value="1"/>
</dbReference>
<dbReference type="PANTHER" id="PTHR11902">
    <property type="entry name" value="ENOLASE"/>
    <property type="match status" value="1"/>
</dbReference>
<dbReference type="PANTHER" id="PTHR11902:SF1">
    <property type="entry name" value="ENOLASE"/>
    <property type="match status" value="1"/>
</dbReference>
<dbReference type="Pfam" id="PF00113">
    <property type="entry name" value="Enolase_C"/>
    <property type="match status" value="1"/>
</dbReference>
<dbReference type="Pfam" id="PF03952">
    <property type="entry name" value="Enolase_N"/>
    <property type="match status" value="1"/>
</dbReference>
<dbReference type="PIRSF" id="PIRSF001400">
    <property type="entry name" value="Enolase"/>
    <property type="match status" value="1"/>
</dbReference>
<dbReference type="PRINTS" id="PR00148">
    <property type="entry name" value="ENOLASE"/>
</dbReference>
<dbReference type="SFLD" id="SFLDS00001">
    <property type="entry name" value="Enolase"/>
    <property type="match status" value="1"/>
</dbReference>
<dbReference type="SFLD" id="SFLDF00002">
    <property type="entry name" value="enolase"/>
    <property type="match status" value="1"/>
</dbReference>
<dbReference type="SMART" id="SM01192">
    <property type="entry name" value="Enolase_C"/>
    <property type="match status" value="1"/>
</dbReference>
<dbReference type="SMART" id="SM01193">
    <property type="entry name" value="Enolase_N"/>
    <property type="match status" value="1"/>
</dbReference>
<dbReference type="SUPFAM" id="SSF51604">
    <property type="entry name" value="Enolase C-terminal domain-like"/>
    <property type="match status" value="1"/>
</dbReference>
<dbReference type="SUPFAM" id="SSF54826">
    <property type="entry name" value="Enolase N-terminal domain-like"/>
    <property type="match status" value="1"/>
</dbReference>
<dbReference type="PROSITE" id="PS00164">
    <property type="entry name" value="ENOLASE"/>
    <property type="match status" value="1"/>
</dbReference>
<reference key="1">
    <citation type="journal article" date="2003" name="Proc. Natl. Acad. Sci. U.S.A.">
        <title>Complete genome sequence and analysis of Wolinella succinogenes.</title>
        <authorList>
            <person name="Baar C."/>
            <person name="Eppinger M."/>
            <person name="Raddatz G."/>
            <person name="Simon J."/>
            <person name="Lanz C."/>
            <person name="Klimmek O."/>
            <person name="Nandakumar R."/>
            <person name="Gross R."/>
            <person name="Rosinus A."/>
            <person name="Keller H."/>
            <person name="Jagtap P."/>
            <person name="Linke B."/>
            <person name="Meyer F."/>
            <person name="Lederer H."/>
            <person name="Schuster S.C."/>
        </authorList>
    </citation>
    <scope>NUCLEOTIDE SEQUENCE [LARGE SCALE GENOMIC DNA]</scope>
    <source>
        <strain>ATCC 29543 / DSM 1740 / CCUG 13145 / JCM 31913 / LMG 7466 / NCTC 11488 / FDC 602W</strain>
    </source>
</reference>
<feature type="chain" id="PRO_0000134010" description="Enolase">
    <location>
        <begin position="1"/>
        <end position="422"/>
    </location>
</feature>
<feature type="active site" description="Proton donor" evidence="1">
    <location>
        <position position="204"/>
    </location>
</feature>
<feature type="active site" description="Proton acceptor" evidence="1">
    <location>
        <position position="337"/>
    </location>
</feature>
<feature type="binding site" evidence="1">
    <location>
        <position position="162"/>
    </location>
    <ligand>
        <name>(2R)-2-phosphoglycerate</name>
        <dbReference type="ChEBI" id="CHEBI:58289"/>
    </ligand>
</feature>
<feature type="binding site" evidence="1">
    <location>
        <position position="241"/>
    </location>
    <ligand>
        <name>Mg(2+)</name>
        <dbReference type="ChEBI" id="CHEBI:18420"/>
    </ligand>
</feature>
<feature type="binding site" evidence="1">
    <location>
        <position position="285"/>
    </location>
    <ligand>
        <name>Mg(2+)</name>
        <dbReference type="ChEBI" id="CHEBI:18420"/>
    </ligand>
</feature>
<feature type="binding site" evidence="1">
    <location>
        <position position="312"/>
    </location>
    <ligand>
        <name>Mg(2+)</name>
        <dbReference type="ChEBI" id="CHEBI:18420"/>
    </ligand>
</feature>
<feature type="binding site" evidence="1">
    <location>
        <position position="337"/>
    </location>
    <ligand>
        <name>(2R)-2-phosphoglycerate</name>
        <dbReference type="ChEBI" id="CHEBI:58289"/>
    </ligand>
</feature>
<feature type="binding site" evidence="1">
    <location>
        <position position="366"/>
    </location>
    <ligand>
        <name>(2R)-2-phosphoglycerate</name>
        <dbReference type="ChEBI" id="CHEBI:58289"/>
    </ligand>
</feature>
<feature type="binding site" evidence="1">
    <location>
        <position position="367"/>
    </location>
    <ligand>
        <name>(2R)-2-phosphoglycerate</name>
        <dbReference type="ChEBI" id="CHEBI:58289"/>
    </ligand>
</feature>
<feature type="binding site" evidence="1">
    <location>
        <position position="388"/>
    </location>
    <ligand>
        <name>(2R)-2-phosphoglycerate</name>
        <dbReference type="ChEBI" id="CHEBI:58289"/>
    </ligand>
</feature>
<organism>
    <name type="scientific">Wolinella succinogenes (strain ATCC 29543 / DSM 1740 / CCUG 13145 / JCM 31913 / LMG 7466 / NCTC 11488 / FDC 602W)</name>
    <name type="common">Vibrio succinogenes</name>
    <dbReference type="NCBI Taxonomy" id="273121"/>
    <lineage>
        <taxon>Bacteria</taxon>
        <taxon>Pseudomonadati</taxon>
        <taxon>Campylobacterota</taxon>
        <taxon>Epsilonproteobacteria</taxon>
        <taxon>Campylobacterales</taxon>
        <taxon>Helicobacteraceae</taxon>
        <taxon>Wolinella</taxon>
    </lineage>
</organism>
<name>ENO_WOLSU</name>